<proteinExistence type="inferred from homology"/>
<sequence length="407" mass="42418">MSAVPLRNGKAAASGVRQVTVLGATGSIGDSTMDLLRATPERYQVEALTANSNVAGLAKLAIEFNARFAAVADASLLGDLRAALAGTGIECGAGEGAVIEAAARPSDWVMAAVAGAAGLKPALAAVDRGATVALANKECLVCAGEFFMQRAADAQACILPADSEHNALFQALASGDRAELTKVIITASGGPFRTWAAADIEQATLAQALKHPNWSMGQKITIDSASMMNKGLEVIEAHWLFALSPDEIEVVVHPQSIIHGMVEFSDRSVVAQLGAPDMRIPIAHCLGWPDRIVGRAAALDLTKIGQLTFEAPDFARFPGLRLAYDALRAGHCATTVYNAANEIAVAAFVKEQIRFGAIARLVEETLNAWIRAGNLAPLGSADDAISVDHKARNLAATLLPQIAAKAS</sequence>
<organism>
    <name type="scientific">Rhodopseudomonas palustris (strain BisA53)</name>
    <dbReference type="NCBI Taxonomy" id="316055"/>
    <lineage>
        <taxon>Bacteria</taxon>
        <taxon>Pseudomonadati</taxon>
        <taxon>Pseudomonadota</taxon>
        <taxon>Alphaproteobacteria</taxon>
        <taxon>Hyphomicrobiales</taxon>
        <taxon>Nitrobacteraceae</taxon>
        <taxon>Rhodopseudomonas</taxon>
    </lineage>
</organism>
<accession>Q07NI7</accession>
<dbReference type="EC" id="1.1.1.267" evidence="1"/>
<dbReference type="EMBL" id="CP000463">
    <property type="protein sequence ID" value="ABJ06497.1"/>
    <property type="molecule type" value="Genomic_DNA"/>
</dbReference>
<dbReference type="SMR" id="Q07NI7"/>
<dbReference type="STRING" id="316055.RPE_2559"/>
<dbReference type="KEGG" id="rpe:RPE_2559"/>
<dbReference type="eggNOG" id="COG0743">
    <property type="taxonomic scope" value="Bacteria"/>
</dbReference>
<dbReference type="HOGENOM" id="CLU_035714_4_0_5"/>
<dbReference type="OrthoDB" id="9806546at2"/>
<dbReference type="UniPathway" id="UPA00056">
    <property type="reaction ID" value="UER00092"/>
</dbReference>
<dbReference type="GO" id="GO:0030604">
    <property type="term" value="F:1-deoxy-D-xylulose-5-phosphate reductoisomerase activity"/>
    <property type="evidence" value="ECO:0007669"/>
    <property type="project" value="UniProtKB-UniRule"/>
</dbReference>
<dbReference type="GO" id="GO:0030145">
    <property type="term" value="F:manganese ion binding"/>
    <property type="evidence" value="ECO:0007669"/>
    <property type="project" value="TreeGrafter"/>
</dbReference>
<dbReference type="GO" id="GO:0070402">
    <property type="term" value="F:NADPH binding"/>
    <property type="evidence" value="ECO:0007669"/>
    <property type="project" value="InterPro"/>
</dbReference>
<dbReference type="GO" id="GO:0051484">
    <property type="term" value="P:isopentenyl diphosphate biosynthetic process, methylerythritol 4-phosphate pathway involved in terpenoid biosynthetic process"/>
    <property type="evidence" value="ECO:0007669"/>
    <property type="project" value="TreeGrafter"/>
</dbReference>
<dbReference type="FunFam" id="3.40.50.720:FF:000045">
    <property type="entry name" value="1-deoxy-D-xylulose 5-phosphate reductoisomerase"/>
    <property type="match status" value="1"/>
</dbReference>
<dbReference type="Gene3D" id="1.10.1740.10">
    <property type="match status" value="1"/>
</dbReference>
<dbReference type="Gene3D" id="3.40.50.720">
    <property type="entry name" value="NAD(P)-binding Rossmann-like Domain"/>
    <property type="match status" value="1"/>
</dbReference>
<dbReference type="HAMAP" id="MF_00183">
    <property type="entry name" value="DXP_reductoisom"/>
    <property type="match status" value="1"/>
</dbReference>
<dbReference type="InterPro" id="IPR003821">
    <property type="entry name" value="DXP_reductoisomerase"/>
</dbReference>
<dbReference type="InterPro" id="IPR013644">
    <property type="entry name" value="DXP_reductoisomerase_C"/>
</dbReference>
<dbReference type="InterPro" id="IPR013512">
    <property type="entry name" value="DXP_reductoisomerase_N"/>
</dbReference>
<dbReference type="InterPro" id="IPR026877">
    <property type="entry name" value="DXPR_C"/>
</dbReference>
<dbReference type="InterPro" id="IPR036169">
    <property type="entry name" value="DXPR_C_sf"/>
</dbReference>
<dbReference type="InterPro" id="IPR036291">
    <property type="entry name" value="NAD(P)-bd_dom_sf"/>
</dbReference>
<dbReference type="NCBIfam" id="TIGR00243">
    <property type="entry name" value="Dxr"/>
    <property type="match status" value="1"/>
</dbReference>
<dbReference type="PANTHER" id="PTHR30525">
    <property type="entry name" value="1-DEOXY-D-XYLULOSE 5-PHOSPHATE REDUCTOISOMERASE"/>
    <property type="match status" value="1"/>
</dbReference>
<dbReference type="PANTHER" id="PTHR30525:SF0">
    <property type="entry name" value="1-DEOXY-D-XYLULOSE 5-PHOSPHATE REDUCTOISOMERASE, CHLOROPLASTIC"/>
    <property type="match status" value="1"/>
</dbReference>
<dbReference type="Pfam" id="PF08436">
    <property type="entry name" value="DXP_redisom_C"/>
    <property type="match status" value="1"/>
</dbReference>
<dbReference type="Pfam" id="PF02670">
    <property type="entry name" value="DXP_reductoisom"/>
    <property type="match status" value="1"/>
</dbReference>
<dbReference type="Pfam" id="PF13288">
    <property type="entry name" value="DXPR_C"/>
    <property type="match status" value="1"/>
</dbReference>
<dbReference type="PIRSF" id="PIRSF006205">
    <property type="entry name" value="Dxp_reductismrs"/>
    <property type="match status" value="1"/>
</dbReference>
<dbReference type="SUPFAM" id="SSF69055">
    <property type="entry name" value="1-deoxy-D-xylulose-5-phosphate reductoisomerase, C-terminal domain"/>
    <property type="match status" value="1"/>
</dbReference>
<dbReference type="SUPFAM" id="SSF55347">
    <property type="entry name" value="Glyceraldehyde-3-phosphate dehydrogenase-like, C-terminal domain"/>
    <property type="match status" value="1"/>
</dbReference>
<dbReference type="SUPFAM" id="SSF51735">
    <property type="entry name" value="NAD(P)-binding Rossmann-fold domains"/>
    <property type="match status" value="1"/>
</dbReference>
<comment type="function">
    <text evidence="1">Catalyzes the NADPH-dependent rearrangement and reduction of 1-deoxy-D-xylulose-5-phosphate (DXP) to 2-C-methyl-D-erythritol 4-phosphate (MEP).</text>
</comment>
<comment type="catalytic activity">
    <reaction evidence="1">
        <text>2-C-methyl-D-erythritol 4-phosphate + NADP(+) = 1-deoxy-D-xylulose 5-phosphate + NADPH + H(+)</text>
        <dbReference type="Rhea" id="RHEA:13717"/>
        <dbReference type="ChEBI" id="CHEBI:15378"/>
        <dbReference type="ChEBI" id="CHEBI:57783"/>
        <dbReference type="ChEBI" id="CHEBI:57792"/>
        <dbReference type="ChEBI" id="CHEBI:58262"/>
        <dbReference type="ChEBI" id="CHEBI:58349"/>
        <dbReference type="EC" id="1.1.1.267"/>
    </reaction>
    <physiologicalReaction direction="right-to-left" evidence="1">
        <dbReference type="Rhea" id="RHEA:13719"/>
    </physiologicalReaction>
</comment>
<comment type="cofactor">
    <cofactor evidence="1">
        <name>Mg(2+)</name>
        <dbReference type="ChEBI" id="CHEBI:18420"/>
    </cofactor>
    <cofactor evidence="1">
        <name>Mn(2+)</name>
        <dbReference type="ChEBI" id="CHEBI:29035"/>
    </cofactor>
</comment>
<comment type="pathway">
    <text evidence="1">Isoprenoid biosynthesis; isopentenyl diphosphate biosynthesis via DXP pathway; isopentenyl diphosphate from 1-deoxy-D-xylulose 5-phosphate: step 1/6.</text>
</comment>
<comment type="similarity">
    <text evidence="1">Belongs to the DXR family.</text>
</comment>
<feature type="chain" id="PRO_1000020300" description="1-deoxy-D-xylulose 5-phosphate reductoisomerase">
    <location>
        <begin position="1"/>
        <end position="407"/>
    </location>
</feature>
<feature type="binding site" evidence="1">
    <location>
        <position position="25"/>
    </location>
    <ligand>
        <name>NADPH</name>
        <dbReference type="ChEBI" id="CHEBI:57783"/>
    </ligand>
</feature>
<feature type="binding site" evidence="1">
    <location>
        <position position="26"/>
    </location>
    <ligand>
        <name>NADPH</name>
        <dbReference type="ChEBI" id="CHEBI:57783"/>
    </ligand>
</feature>
<feature type="binding site" evidence="1">
    <location>
        <position position="27"/>
    </location>
    <ligand>
        <name>NADPH</name>
        <dbReference type="ChEBI" id="CHEBI:57783"/>
    </ligand>
</feature>
<feature type="binding site" evidence="1">
    <location>
        <position position="28"/>
    </location>
    <ligand>
        <name>NADPH</name>
        <dbReference type="ChEBI" id="CHEBI:57783"/>
    </ligand>
</feature>
<feature type="binding site" evidence="1">
    <location>
        <position position="53"/>
    </location>
    <ligand>
        <name>NADPH</name>
        <dbReference type="ChEBI" id="CHEBI:57783"/>
    </ligand>
</feature>
<feature type="binding site" evidence="1">
    <location>
        <position position="136"/>
    </location>
    <ligand>
        <name>NADPH</name>
        <dbReference type="ChEBI" id="CHEBI:57783"/>
    </ligand>
</feature>
<feature type="binding site" evidence="1">
    <location>
        <position position="137"/>
    </location>
    <ligand>
        <name>1-deoxy-D-xylulose 5-phosphate</name>
        <dbReference type="ChEBI" id="CHEBI:57792"/>
    </ligand>
</feature>
<feature type="binding site" evidence="1">
    <location>
        <position position="138"/>
    </location>
    <ligand>
        <name>NADPH</name>
        <dbReference type="ChEBI" id="CHEBI:57783"/>
    </ligand>
</feature>
<feature type="binding site" evidence="1">
    <location>
        <position position="162"/>
    </location>
    <ligand>
        <name>Mn(2+)</name>
        <dbReference type="ChEBI" id="CHEBI:29035"/>
    </ligand>
</feature>
<feature type="binding site" evidence="1">
    <location>
        <position position="163"/>
    </location>
    <ligand>
        <name>1-deoxy-D-xylulose 5-phosphate</name>
        <dbReference type="ChEBI" id="CHEBI:57792"/>
    </ligand>
</feature>
<feature type="binding site" evidence="1">
    <location>
        <position position="164"/>
    </location>
    <ligand>
        <name>1-deoxy-D-xylulose 5-phosphate</name>
        <dbReference type="ChEBI" id="CHEBI:57792"/>
    </ligand>
</feature>
<feature type="binding site" evidence="1">
    <location>
        <position position="164"/>
    </location>
    <ligand>
        <name>Mn(2+)</name>
        <dbReference type="ChEBI" id="CHEBI:29035"/>
    </ligand>
</feature>
<feature type="binding site" evidence="1">
    <location>
        <position position="188"/>
    </location>
    <ligand>
        <name>1-deoxy-D-xylulose 5-phosphate</name>
        <dbReference type="ChEBI" id="CHEBI:57792"/>
    </ligand>
</feature>
<feature type="binding site" evidence="1">
    <location>
        <position position="211"/>
    </location>
    <ligand>
        <name>1-deoxy-D-xylulose 5-phosphate</name>
        <dbReference type="ChEBI" id="CHEBI:57792"/>
    </ligand>
</feature>
<feature type="binding site" evidence="1">
    <location>
        <position position="217"/>
    </location>
    <ligand>
        <name>NADPH</name>
        <dbReference type="ChEBI" id="CHEBI:57783"/>
    </ligand>
</feature>
<feature type="binding site" evidence="1">
    <location>
        <position position="224"/>
    </location>
    <ligand>
        <name>1-deoxy-D-xylulose 5-phosphate</name>
        <dbReference type="ChEBI" id="CHEBI:57792"/>
    </ligand>
</feature>
<feature type="binding site" evidence="1">
    <location>
        <position position="229"/>
    </location>
    <ligand>
        <name>1-deoxy-D-xylulose 5-phosphate</name>
        <dbReference type="ChEBI" id="CHEBI:57792"/>
    </ligand>
</feature>
<feature type="binding site" evidence="1">
    <location>
        <position position="230"/>
    </location>
    <ligand>
        <name>1-deoxy-D-xylulose 5-phosphate</name>
        <dbReference type="ChEBI" id="CHEBI:57792"/>
    </ligand>
</feature>
<feature type="binding site" evidence="1">
    <location>
        <position position="233"/>
    </location>
    <ligand>
        <name>1-deoxy-D-xylulose 5-phosphate</name>
        <dbReference type="ChEBI" id="CHEBI:57792"/>
    </ligand>
</feature>
<feature type="binding site" evidence="1">
    <location>
        <position position="233"/>
    </location>
    <ligand>
        <name>Mn(2+)</name>
        <dbReference type="ChEBI" id="CHEBI:29035"/>
    </ligand>
</feature>
<reference key="1">
    <citation type="submission" date="2006-09" db="EMBL/GenBank/DDBJ databases">
        <title>Complete sequence of Rhodopseudomonas palustris BisA53.</title>
        <authorList>
            <consortium name="US DOE Joint Genome Institute"/>
            <person name="Copeland A."/>
            <person name="Lucas S."/>
            <person name="Lapidus A."/>
            <person name="Barry K."/>
            <person name="Detter J.C."/>
            <person name="Glavina del Rio T."/>
            <person name="Hammon N."/>
            <person name="Israni S."/>
            <person name="Dalin E."/>
            <person name="Tice H."/>
            <person name="Pitluck S."/>
            <person name="Chain P."/>
            <person name="Malfatti S."/>
            <person name="Shin M."/>
            <person name="Vergez L."/>
            <person name="Schmutz J."/>
            <person name="Larimer F."/>
            <person name="Land M."/>
            <person name="Hauser L."/>
            <person name="Pelletier D.A."/>
            <person name="Kyrpides N."/>
            <person name="Kim E."/>
            <person name="Harwood C.S."/>
            <person name="Oda Y."/>
            <person name="Richardson P."/>
        </authorList>
    </citation>
    <scope>NUCLEOTIDE SEQUENCE [LARGE SCALE GENOMIC DNA]</scope>
    <source>
        <strain>BisA53</strain>
    </source>
</reference>
<keyword id="KW-0414">Isoprene biosynthesis</keyword>
<keyword id="KW-0464">Manganese</keyword>
<keyword id="KW-0479">Metal-binding</keyword>
<keyword id="KW-0521">NADP</keyword>
<keyword id="KW-0560">Oxidoreductase</keyword>
<name>DXR_RHOP5</name>
<gene>
    <name evidence="1" type="primary">dxr</name>
    <name type="ordered locus">RPE_2559</name>
</gene>
<protein>
    <recommendedName>
        <fullName evidence="1">1-deoxy-D-xylulose 5-phosphate reductoisomerase</fullName>
        <shortName evidence="1">DXP reductoisomerase</shortName>
        <ecNumber evidence="1">1.1.1.267</ecNumber>
    </recommendedName>
    <alternativeName>
        <fullName evidence="1">1-deoxyxylulose-5-phosphate reductoisomerase</fullName>
    </alternativeName>
    <alternativeName>
        <fullName evidence="1">2-C-methyl-D-erythritol 4-phosphate synthase</fullName>
    </alternativeName>
</protein>
<evidence type="ECO:0000255" key="1">
    <source>
        <dbReference type="HAMAP-Rule" id="MF_00183"/>
    </source>
</evidence>